<organism>
    <name type="scientific">Saccharomyces cerevisiae (strain ATCC 204508 / S288c)</name>
    <name type="common">Baker's yeast</name>
    <dbReference type="NCBI Taxonomy" id="559292"/>
    <lineage>
        <taxon>Eukaryota</taxon>
        <taxon>Fungi</taxon>
        <taxon>Dikarya</taxon>
        <taxon>Ascomycota</taxon>
        <taxon>Saccharomycotina</taxon>
        <taxon>Saccharomycetes</taxon>
        <taxon>Saccharomycetales</taxon>
        <taxon>Saccharomycetaceae</taxon>
        <taxon>Saccharomyces</taxon>
    </lineage>
</organism>
<accession>Q08954</accession>
<accession>D6W3H0</accession>
<gene>
    <name evidence="8" type="primary">NBR9</name>
    <name type="ordered locus">YPL199C</name>
</gene>
<comment type="function">
    <text evidence="5">Endonuclease involved in nonstop mRNA decay via the formation of mRNA cleavage fragments in the vicinity of stalled ribosomes.</text>
</comment>
<comment type="subcellular location">
    <subcellularLocation>
        <location evidence="3">Cytoplasm</location>
    </subcellularLocation>
    <text evidence="6">localizes to the proximity of the head region of the ribosomal 40S subunit (hr40S).</text>
</comment>
<comment type="disruption phenotype">
    <text evidence="5">Impairs nonstop mRNA decay.</text>
</comment>
<comment type="miscellaneous">
    <text evidence="4">Present with 2130 molecules/cell in log phase SD medium.</text>
</comment>
<keyword id="KW-0963">Cytoplasm</keyword>
<keyword id="KW-0255">Endonuclease</keyword>
<keyword id="KW-0378">Hydrolase</keyword>
<keyword id="KW-0540">Nuclease</keyword>
<keyword id="KW-1185">Reference proteome</keyword>
<sequence>MKGTGGVVVGTQNPVRDYNHSTDEEYQRLRRLADEAYKKRDQLSHESQTAYQQGDKKLAHELSEKSKAQLKTAEDFNMQAAEYVFVENNADSSSNEIDLHGLYVKEALFILQKRIKFAIDHNEPQLNVIVGKGLHSQNGIAKLKPSIEEFCAKHGIRNHLEKGNSGVLVLELQGVQMQMDGPAVNAPTNQYNAQPHPQYNNNGGQPQGQAQNYNNSGNDNKDSTLTSIFKIFCNCIQSLA</sequence>
<evidence type="ECO:0000255" key="1">
    <source>
        <dbReference type="PROSITE-ProRule" id="PRU00321"/>
    </source>
</evidence>
<evidence type="ECO:0000256" key="2">
    <source>
        <dbReference type="SAM" id="MobiDB-lite"/>
    </source>
</evidence>
<evidence type="ECO:0000269" key="3">
    <source>
    </source>
</evidence>
<evidence type="ECO:0000269" key="4">
    <source>
    </source>
</evidence>
<evidence type="ECO:0000269" key="5">
    <source>
    </source>
</evidence>
<evidence type="ECO:0000269" key="6">
    <source>
    </source>
</evidence>
<evidence type="ECO:0000303" key="7">
    <source>
    </source>
</evidence>
<evidence type="ECO:0000305" key="8"/>
<evidence type="ECO:0000305" key="9">
    <source>
    </source>
</evidence>
<feature type="chain" id="PRO_0000238659" description="Endonuclease NBR9">
    <location>
        <begin position="1"/>
        <end position="240"/>
    </location>
</feature>
<feature type="domain" description="Smr" evidence="1">
    <location>
        <begin position="97"/>
        <end position="173"/>
    </location>
</feature>
<feature type="region of interest" description="Disordered" evidence="2">
    <location>
        <begin position="1"/>
        <end position="24"/>
    </location>
</feature>
<feature type="region of interest" description="Disordered" evidence="2">
    <location>
        <begin position="181"/>
        <end position="219"/>
    </location>
</feature>
<feature type="compositionally biased region" description="Low complexity" evidence="2">
    <location>
        <begin position="194"/>
        <end position="215"/>
    </location>
</feature>
<name>NBR9_YEAST</name>
<dbReference type="EC" id="3.1.-.-" evidence="9"/>
<dbReference type="EMBL" id="Z73555">
    <property type="protein sequence ID" value="CAA97913.1"/>
    <property type="molecule type" value="Genomic_DNA"/>
</dbReference>
<dbReference type="EMBL" id="BK006949">
    <property type="protein sequence ID" value="DAA11236.1"/>
    <property type="molecule type" value="Genomic_DNA"/>
</dbReference>
<dbReference type="PIR" id="S65218">
    <property type="entry name" value="S65218"/>
</dbReference>
<dbReference type="RefSeq" id="NP_015125.1">
    <property type="nucleotide sequence ID" value="NM_001184013.1"/>
</dbReference>
<dbReference type="SMR" id="Q08954"/>
<dbReference type="BioGRID" id="35985">
    <property type="interactions" value="27"/>
</dbReference>
<dbReference type="FunCoup" id="Q08954">
    <property type="interactions" value="41"/>
</dbReference>
<dbReference type="IntAct" id="Q08954">
    <property type="interactions" value="3"/>
</dbReference>
<dbReference type="MINT" id="Q08954"/>
<dbReference type="STRING" id="4932.YPL199C"/>
<dbReference type="iPTMnet" id="Q08954"/>
<dbReference type="SwissPalm" id="Q08954"/>
<dbReference type="PaxDb" id="4932-YPL199C"/>
<dbReference type="PeptideAtlas" id="Q08954"/>
<dbReference type="EnsemblFungi" id="YPL199C_mRNA">
    <property type="protein sequence ID" value="YPL199C"/>
    <property type="gene ID" value="YPL199C"/>
</dbReference>
<dbReference type="GeneID" id="855902"/>
<dbReference type="KEGG" id="sce:YPL199C"/>
<dbReference type="AGR" id="SGD:S000006120"/>
<dbReference type="SGD" id="S000006120">
    <property type="gene designation" value="NBR9"/>
</dbReference>
<dbReference type="VEuPathDB" id="FungiDB:YPL199C"/>
<dbReference type="eggNOG" id="KOG2401">
    <property type="taxonomic scope" value="Eukaryota"/>
</dbReference>
<dbReference type="HOGENOM" id="CLU_069447_1_0_1"/>
<dbReference type="InParanoid" id="Q08954"/>
<dbReference type="OMA" id="DYIFREN"/>
<dbReference type="OrthoDB" id="3231855at2759"/>
<dbReference type="BioCyc" id="YEAST:G3O-34091-MONOMER"/>
<dbReference type="BioGRID-ORCS" id="855902">
    <property type="hits" value="2 hits in 10 CRISPR screens"/>
</dbReference>
<dbReference type="PRO" id="PR:Q08954"/>
<dbReference type="Proteomes" id="UP000002311">
    <property type="component" value="Chromosome XVI"/>
</dbReference>
<dbReference type="RNAct" id="Q08954">
    <property type="molecule type" value="protein"/>
</dbReference>
<dbReference type="GO" id="GO:0071944">
    <property type="term" value="C:cell periphery"/>
    <property type="evidence" value="ECO:0007005"/>
    <property type="project" value="SGD"/>
</dbReference>
<dbReference type="GO" id="GO:0005737">
    <property type="term" value="C:cytoplasm"/>
    <property type="evidence" value="ECO:0007005"/>
    <property type="project" value="SGD"/>
</dbReference>
<dbReference type="GO" id="GO:0004519">
    <property type="term" value="F:endonuclease activity"/>
    <property type="evidence" value="ECO:0007669"/>
    <property type="project" value="UniProtKB-KW"/>
</dbReference>
<dbReference type="GO" id="GO:0070481">
    <property type="term" value="P:nuclear-transcribed mRNA catabolic process, non-stop decay"/>
    <property type="evidence" value="ECO:0000315"/>
    <property type="project" value="SGD"/>
</dbReference>
<dbReference type="FunFam" id="3.30.1370.110:FF:000008">
    <property type="entry name" value="YPL199C-like protein"/>
    <property type="match status" value="1"/>
</dbReference>
<dbReference type="Gene3D" id="3.30.1370.110">
    <property type="match status" value="1"/>
</dbReference>
<dbReference type="InterPro" id="IPR013899">
    <property type="entry name" value="DUF1771"/>
</dbReference>
<dbReference type="InterPro" id="IPR002625">
    <property type="entry name" value="Smr_dom"/>
</dbReference>
<dbReference type="InterPro" id="IPR036063">
    <property type="entry name" value="Smr_dom_sf"/>
</dbReference>
<dbReference type="InterPro" id="IPR053020">
    <property type="entry name" value="Smr_domain_protein"/>
</dbReference>
<dbReference type="PANTHER" id="PTHR47417">
    <property type="entry name" value="SMR DOMAIN-CONTAINING PROTEIN YPL199C"/>
    <property type="match status" value="1"/>
</dbReference>
<dbReference type="PANTHER" id="PTHR47417:SF1">
    <property type="entry name" value="SMR DOMAIN-CONTAINING PROTEIN YPL199C"/>
    <property type="match status" value="1"/>
</dbReference>
<dbReference type="Pfam" id="PF08590">
    <property type="entry name" value="DUF1771"/>
    <property type="match status" value="1"/>
</dbReference>
<dbReference type="Pfam" id="PF01713">
    <property type="entry name" value="Smr"/>
    <property type="match status" value="1"/>
</dbReference>
<dbReference type="SMART" id="SM01162">
    <property type="entry name" value="DUF1771"/>
    <property type="match status" value="1"/>
</dbReference>
<dbReference type="SMART" id="SM00463">
    <property type="entry name" value="SMR"/>
    <property type="match status" value="1"/>
</dbReference>
<dbReference type="SUPFAM" id="SSF160443">
    <property type="entry name" value="SMR domain-like"/>
    <property type="match status" value="1"/>
</dbReference>
<dbReference type="PROSITE" id="PS50828">
    <property type="entry name" value="SMR"/>
    <property type="match status" value="1"/>
</dbReference>
<proteinExistence type="evidence at protein level"/>
<protein>
    <recommendedName>
        <fullName evidence="7">Endonuclease NBR9</fullName>
        <ecNumber evidence="9">3.1.-.-</ecNumber>
    </recommendedName>
    <alternativeName>
        <fullName evidence="8">Protein number nine</fullName>
    </alternativeName>
</protein>
<reference key="1">
    <citation type="journal article" date="1997" name="Nature">
        <title>The nucleotide sequence of Saccharomyces cerevisiae chromosome XVI.</title>
        <authorList>
            <person name="Bussey H."/>
            <person name="Storms R.K."/>
            <person name="Ahmed A."/>
            <person name="Albermann K."/>
            <person name="Allen E."/>
            <person name="Ansorge W."/>
            <person name="Araujo R."/>
            <person name="Aparicio A."/>
            <person name="Barrell B.G."/>
            <person name="Badcock K."/>
            <person name="Benes V."/>
            <person name="Botstein D."/>
            <person name="Bowman S."/>
            <person name="Brueckner M."/>
            <person name="Carpenter J."/>
            <person name="Cherry J.M."/>
            <person name="Chung E."/>
            <person name="Churcher C.M."/>
            <person name="Coster F."/>
            <person name="Davis K."/>
            <person name="Davis R.W."/>
            <person name="Dietrich F.S."/>
            <person name="Delius H."/>
            <person name="DiPaolo T."/>
            <person name="Dubois E."/>
            <person name="Duesterhoeft A."/>
            <person name="Duncan M."/>
            <person name="Floeth M."/>
            <person name="Fortin N."/>
            <person name="Friesen J.D."/>
            <person name="Fritz C."/>
            <person name="Goffeau A."/>
            <person name="Hall J."/>
            <person name="Hebling U."/>
            <person name="Heumann K."/>
            <person name="Hilbert H."/>
            <person name="Hillier L.W."/>
            <person name="Hunicke-Smith S."/>
            <person name="Hyman R.W."/>
            <person name="Johnston M."/>
            <person name="Kalman S."/>
            <person name="Kleine K."/>
            <person name="Komp C."/>
            <person name="Kurdi O."/>
            <person name="Lashkari D."/>
            <person name="Lew H."/>
            <person name="Lin A."/>
            <person name="Lin D."/>
            <person name="Louis E.J."/>
            <person name="Marathe R."/>
            <person name="Messenguy F."/>
            <person name="Mewes H.-W."/>
            <person name="Mirtipati S."/>
            <person name="Moestl D."/>
            <person name="Mueller-Auer S."/>
            <person name="Namath A."/>
            <person name="Nentwich U."/>
            <person name="Oefner P."/>
            <person name="Pearson D."/>
            <person name="Petel F.X."/>
            <person name="Pohl T.M."/>
            <person name="Purnelle B."/>
            <person name="Rajandream M.A."/>
            <person name="Rechmann S."/>
            <person name="Rieger M."/>
            <person name="Riles L."/>
            <person name="Roberts D."/>
            <person name="Schaefer M."/>
            <person name="Scharfe M."/>
            <person name="Scherens B."/>
            <person name="Schramm S."/>
            <person name="Schroeder M."/>
            <person name="Sdicu A.-M."/>
            <person name="Tettelin H."/>
            <person name="Urrestarazu L.A."/>
            <person name="Ushinsky S."/>
            <person name="Vierendeels F."/>
            <person name="Vissers S."/>
            <person name="Voss H."/>
            <person name="Walsh S.V."/>
            <person name="Wambutt R."/>
            <person name="Wang Y."/>
            <person name="Wedler E."/>
            <person name="Wedler H."/>
            <person name="Winnett E."/>
            <person name="Zhong W.-W."/>
            <person name="Zollner A."/>
            <person name="Vo D.H."/>
            <person name="Hani J."/>
        </authorList>
    </citation>
    <scope>NUCLEOTIDE SEQUENCE [LARGE SCALE GENOMIC DNA]</scope>
    <source>
        <strain>ATCC 204508 / S288c</strain>
    </source>
</reference>
<reference key="2">
    <citation type="journal article" date="2014" name="G3 (Bethesda)">
        <title>The reference genome sequence of Saccharomyces cerevisiae: Then and now.</title>
        <authorList>
            <person name="Engel S.R."/>
            <person name="Dietrich F.S."/>
            <person name="Fisk D.G."/>
            <person name="Binkley G."/>
            <person name="Balakrishnan R."/>
            <person name="Costanzo M.C."/>
            <person name="Dwight S.S."/>
            <person name="Hitz B.C."/>
            <person name="Karra K."/>
            <person name="Nash R.S."/>
            <person name="Weng S."/>
            <person name="Wong E.D."/>
            <person name="Lloyd P."/>
            <person name="Skrzypek M.S."/>
            <person name="Miyasato S.R."/>
            <person name="Simison M."/>
            <person name="Cherry J.M."/>
        </authorList>
    </citation>
    <scope>GENOME REANNOTATION</scope>
    <source>
        <strain>ATCC 204508 / S288c</strain>
    </source>
</reference>
<reference key="3">
    <citation type="journal article" date="2003" name="Nature">
        <title>Global analysis of protein localization in budding yeast.</title>
        <authorList>
            <person name="Huh W.-K."/>
            <person name="Falvo J.V."/>
            <person name="Gerke L.C."/>
            <person name="Carroll A.S."/>
            <person name="Howson R.W."/>
            <person name="Weissman J.S."/>
            <person name="O'Shea E.K."/>
        </authorList>
    </citation>
    <scope>SUBCELLULAR LOCATION [LARGE SCALE ANALYSIS]</scope>
</reference>
<reference key="4">
    <citation type="journal article" date="2003" name="Nature">
        <title>Global analysis of protein expression in yeast.</title>
        <authorList>
            <person name="Ghaemmaghami S."/>
            <person name="Huh W.-K."/>
            <person name="Bower K."/>
            <person name="Howson R.W."/>
            <person name="Belle A."/>
            <person name="Dephoure N."/>
            <person name="O'Shea E.K."/>
            <person name="Weissman J.S."/>
        </authorList>
    </citation>
    <scope>LEVEL OF PROTEIN EXPRESSION [LARGE SCALE ANALYSIS]</scope>
</reference>
<reference key="5">
    <citation type="journal article" date="2012" name="Proc. Natl. Acad. Sci. U.S.A.">
        <title>N-terminal acetylome analyses and functional insights of the N-terminal acetyltransferase NatB.</title>
        <authorList>
            <person name="Van Damme P."/>
            <person name="Lasa M."/>
            <person name="Polevoda B."/>
            <person name="Gazquez C."/>
            <person name="Elosegui-Artola A."/>
            <person name="Kim D.S."/>
            <person name="De Juan-Pardo E."/>
            <person name="Demeyer K."/>
            <person name="Hole K."/>
            <person name="Larrea E."/>
            <person name="Timmerman E."/>
            <person name="Prieto J."/>
            <person name="Arnesen T."/>
            <person name="Sherman F."/>
            <person name="Gevaert K."/>
            <person name="Aldabe R."/>
        </authorList>
    </citation>
    <scope>IDENTIFICATION BY MASS SPECTROMETRY [LARGE SCALE ANALYSIS]</scope>
</reference>
<reference key="6">
    <citation type="journal article" date="2020" name="Cell Rep.">
        <title>NONU-1 Encodes a Conserved Endonuclease Required for mRNA Translation Surveillance.</title>
        <authorList>
            <person name="Glover M.L."/>
            <person name="Burroughs A.M."/>
            <person name="Monem P.C."/>
            <person name="Egelhofer T.A."/>
            <person name="Pule M.N."/>
            <person name="Aravind L."/>
            <person name="Arribere J.A."/>
        </authorList>
    </citation>
    <scope>FUNCTION</scope>
    <scope>DISRUPTION PHENOTYPE</scope>
</reference>
<reference key="7">
    <citation type="journal article" date="2021" name="Int. J. Mol. Sci.">
        <title>A multi-perspective proximity view on the dynamic head region of the ribosomal 40S subunit.</title>
        <authorList>
            <person name="Schmitt K."/>
            <person name="Kraft A.A."/>
            <person name="Valerius O."/>
        </authorList>
    </citation>
    <scope>SUBCELLULAR LOCATION</scope>
</reference>